<gene>
    <name type="primary">gnd</name>
</gene>
<reference key="1">
    <citation type="journal article" date="1994" name="Proc. Natl. Acad. Sci. U.S.A.">
        <title>Intergeneric transfer and recombination of the 6-phosphogluconate dehydrogenase gene (gnd) in enteric bacteria.</title>
        <authorList>
            <person name="Nelson K."/>
            <person name="Selander R.K."/>
        </authorList>
    </citation>
    <scope>NUCLEOTIDE SEQUENCE [GENOMIC DNA]</scope>
    <source>
        <strain>ATCC 33821 / DSM 4564 / JCM 1688 / BCRC 15953 / CCUG 15715 / LMG 7868 / NBRC 102420 / NCTC 12130 / CDC 875-72 / NIH 580</strain>
    </source>
</reference>
<protein>
    <recommendedName>
        <fullName>6-phosphogluconate dehydrogenase, decarboxylating</fullName>
        <ecNumber>1.1.1.44</ecNumber>
    </recommendedName>
</protein>
<accession>P41574</accession>
<feature type="chain" id="PRO_0000090039" description="6-phosphogluconate dehydrogenase, decarboxylating">
    <location>
        <begin position="1" status="less than"/>
        <end position="445" status="greater than"/>
    </location>
</feature>
<feature type="active site" description="Proton acceptor" evidence="1">
    <location>
        <position position="172"/>
    </location>
</feature>
<feature type="active site" description="Proton donor" evidence="1">
    <location>
        <position position="179"/>
    </location>
</feature>
<feature type="binding site" evidence="1">
    <location>
        <begin position="1"/>
        <end position="4"/>
    </location>
    <ligand>
        <name>NADP(+)</name>
        <dbReference type="ChEBI" id="CHEBI:58349"/>
    </ligand>
</feature>
<feature type="binding site" evidence="1">
    <location>
        <begin position="22"/>
        <end position="24"/>
    </location>
    <ligand>
        <name>NADP(+)</name>
        <dbReference type="ChEBI" id="CHEBI:58349"/>
    </ligand>
</feature>
<feature type="binding site" evidence="1">
    <location>
        <begin position="63"/>
        <end position="65"/>
    </location>
    <ligand>
        <name>NADP(+)</name>
        <dbReference type="ChEBI" id="CHEBI:58349"/>
    </ligand>
</feature>
<feature type="binding site" evidence="1">
    <location>
        <position position="91"/>
    </location>
    <ligand>
        <name>NADP(+)</name>
        <dbReference type="ChEBI" id="CHEBI:58349"/>
    </ligand>
</feature>
<feature type="binding site" description="in other chain" evidence="1">
    <location>
        <position position="91"/>
    </location>
    <ligand>
        <name>substrate</name>
        <note>ligand shared between dimeric partners</note>
    </ligand>
</feature>
<feature type="binding site" description="in other chain" evidence="1">
    <location>
        <begin position="117"/>
        <end position="119"/>
    </location>
    <ligand>
        <name>substrate</name>
        <note>ligand shared between dimeric partners</note>
    </ligand>
</feature>
<feature type="binding site" description="in other chain" evidence="1">
    <location>
        <begin position="175"/>
        <end position="176"/>
    </location>
    <ligand>
        <name>substrate</name>
        <note>ligand shared between dimeric partners</note>
    </ligand>
</feature>
<feature type="binding site" description="in other chain" evidence="1">
    <location>
        <position position="180"/>
    </location>
    <ligand>
        <name>substrate</name>
        <note>ligand shared between dimeric partners</note>
    </ligand>
</feature>
<feature type="binding site" description="in other chain" evidence="1">
    <location>
        <position position="249"/>
    </location>
    <ligand>
        <name>substrate</name>
        <note>ligand shared between dimeric partners</note>
    </ligand>
</feature>
<feature type="binding site" description="in other chain" evidence="1">
    <location>
        <position position="276"/>
    </location>
    <ligand>
        <name>substrate</name>
        <note>ligand shared between dimeric partners</note>
    </ligand>
</feature>
<feature type="binding site" evidence="1">
    <location>
        <position position="434"/>
    </location>
    <ligand>
        <name>substrate</name>
        <note>ligand shared between dimeric partners</note>
    </ligand>
</feature>
<feature type="binding site" evidence="1">
    <location>
        <position position="440"/>
    </location>
    <ligand>
        <name>substrate</name>
        <note>ligand shared between dimeric partners</note>
    </ligand>
</feature>
<feature type="non-terminal residue">
    <location>
        <position position="1"/>
    </location>
</feature>
<feature type="non-terminal residue">
    <location>
        <position position="445"/>
    </location>
</feature>
<dbReference type="EC" id="1.1.1.44"/>
<dbReference type="EMBL" id="U14465">
    <property type="protein sequence ID" value="AAC43815.1"/>
    <property type="molecule type" value="Genomic_DNA"/>
</dbReference>
<dbReference type="SMR" id="P41574"/>
<dbReference type="UniPathway" id="UPA00115">
    <property type="reaction ID" value="UER00410"/>
</dbReference>
<dbReference type="GO" id="GO:0050661">
    <property type="term" value="F:NADP binding"/>
    <property type="evidence" value="ECO:0007669"/>
    <property type="project" value="InterPro"/>
</dbReference>
<dbReference type="GO" id="GO:0004616">
    <property type="term" value="F:phosphogluconate dehydrogenase (decarboxylating) activity"/>
    <property type="evidence" value="ECO:0000250"/>
    <property type="project" value="UniProtKB"/>
</dbReference>
<dbReference type="GO" id="GO:0019521">
    <property type="term" value="P:D-gluconate metabolic process"/>
    <property type="evidence" value="ECO:0007669"/>
    <property type="project" value="UniProtKB-KW"/>
</dbReference>
<dbReference type="GO" id="GO:0016054">
    <property type="term" value="P:organic acid catabolic process"/>
    <property type="evidence" value="ECO:0007669"/>
    <property type="project" value="UniProtKB-ARBA"/>
</dbReference>
<dbReference type="GO" id="GO:0006098">
    <property type="term" value="P:pentose-phosphate shunt"/>
    <property type="evidence" value="ECO:0000250"/>
    <property type="project" value="UniProtKB"/>
</dbReference>
<dbReference type="FunFam" id="1.10.1040.10:FF:000002">
    <property type="entry name" value="6-phosphogluconate dehydrogenase, decarboxylating"/>
    <property type="match status" value="1"/>
</dbReference>
<dbReference type="FunFam" id="3.40.50.720:FF:000007">
    <property type="entry name" value="6-phosphogluconate dehydrogenase, decarboxylating"/>
    <property type="match status" value="1"/>
</dbReference>
<dbReference type="Gene3D" id="1.20.5.320">
    <property type="entry name" value="6-Phosphogluconate Dehydrogenase, domain 3"/>
    <property type="match status" value="1"/>
</dbReference>
<dbReference type="Gene3D" id="1.10.1040.10">
    <property type="entry name" value="N-(1-d-carboxylethyl)-l-norvaline Dehydrogenase, domain 2"/>
    <property type="match status" value="1"/>
</dbReference>
<dbReference type="Gene3D" id="3.40.50.720">
    <property type="entry name" value="NAD(P)-binding Rossmann-like Domain"/>
    <property type="match status" value="1"/>
</dbReference>
<dbReference type="InterPro" id="IPR008927">
    <property type="entry name" value="6-PGluconate_DH-like_C_sf"/>
</dbReference>
<dbReference type="InterPro" id="IPR013328">
    <property type="entry name" value="6PGD_dom2"/>
</dbReference>
<dbReference type="InterPro" id="IPR006114">
    <property type="entry name" value="6PGDH_C"/>
</dbReference>
<dbReference type="InterPro" id="IPR006113">
    <property type="entry name" value="6PGDH_Gnd/GntZ"/>
</dbReference>
<dbReference type="InterPro" id="IPR006115">
    <property type="entry name" value="6PGDH_NADP-bd"/>
</dbReference>
<dbReference type="InterPro" id="IPR006184">
    <property type="entry name" value="6PGdom_BS"/>
</dbReference>
<dbReference type="InterPro" id="IPR036291">
    <property type="entry name" value="NAD(P)-bd_dom_sf"/>
</dbReference>
<dbReference type="InterPro" id="IPR006183">
    <property type="entry name" value="Pgluconate_DH"/>
</dbReference>
<dbReference type="NCBIfam" id="TIGR00873">
    <property type="entry name" value="gnd"/>
    <property type="match status" value="1"/>
</dbReference>
<dbReference type="NCBIfam" id="NF006765">
    <property type="entry name" value="PRK09287.1"/>
    <property type="match status" value="1"/>
</dbReference>
<dbReference type="PANTHER" id="PTHR11811">
    <property type="entry name" value="6-PHOSPHOGLUCONATE DEHYDROGENASE"/>
    <property type="match status" value="1"/>
</dbReference>
<dbReference type="Pfam" id="PF00393">
    <property type="entry name" value="6PGD"/>
    <property type="match status" value="1"/>
</dbReference>
<dbReference type="Pfam" id="PF03446">
    <property type="entry name" value="NAD_binding_2"/>
    <property type="match status" value="1"/>
</dbReference>
<dbReference type="PIRSF" id="PIRSF000109">
    <property type="entry name" value="6PGD"/>
    <property type="match status" value="1"/>
</dbReference>
<dbReference type="PRINTS" id="PR00076">
    <property type="entry name" value="6PGDHDRGNASE"/>
</dbReference>
<dbReference type="SMART" id="SM01350">
    <property type="entry name" value="6PGD"/>
    <property type="match status" value="1"/>
</dbReference>
<dbReference type="SUPFAM" id="SSF48179">
    <property type="entry name" value="6-phosphogluconate dehydrogenase C-terminal domain-like"/>
    <property type="match status" value="1"/>
</dbReference>
<dbReference type="SUPFAM" id="SSF51735">
    <property type="entry name" value="NAD(P)-binding Rossmann-fold domains"/>
    <property type="match status" value="1"/>
</dbReference>
<dbReference type="PROSITE" id="PS00461">
    <property type="entry name" value="6PGD"/>
    <property type="match status" value="1"/>
</dbReference>
<sequence length="445" mass="48806">AVMGRNLALNIESRGYTVSVFNRSREKTEEVVAENPGKKLVPYYTVQEFVESLETPRRILLMVQAGAGTDAAINSLKPYLDKGDIIIDGGNTFFHDTIRRNRELSAEGFNFIGTGVSGGEEGALKGPSIMPGGQKEAYELVAPILTKIAAVAEDGEPCVTYIGADGAGHYVKMVHNGIEYGDMQLIAEAYSLLKGGLNLSNEELAQTFTEWNKGELSSYLIDITKDIFTKKDEEGKYLVDVILDEAANKGTGKWTSQSSLDLGEPLSLITESVFARYISSLKEQRVAASKVLSGPQSQPAGDKAEFIEKVRRALYLGKIVSYAQGFSQLRAASEEYNWDLNYGEIAKIFRAGCIIRAQFLQKITDAYAETPAIANLLLAPYFKQIADDYQQALRDVVAYAVQNGIPVPTFGAAVAYYDSYRAAVLPANLIQAQRDYFGAHTYKRT</sequence>
<keyword id="KW-0311">Gluconate utilization</keyword>
<keyword id="KW-0521">NADP</keyword>
<keyword id="KW-0560">Oxidoreductase</keyword>
<keyword id="KW-0570">Pentose shunt</keyword>
<comment type="function">
    <text evidence="1">Catalyzes the oxidative decarboxylation of 6-phosphogluconate to ribulose 5-phosphate and CO(2), with concomitant reduction of NADP to NADPH.</text>
</comment>
<comment type="catalytic activity">
    <reaction>
        <text>6-phospho-D-gluconate + NADP(+) = D-ribulose 5-phosphate + CO2 + NADPH</text>
        <dbReference type="Rhea" id="RHEA:10116"/>
        <dbReference type="ChEBI" id="CHEBI:16526"/>
        <dbReference type="ChEBI" id="CHEBI:57783"/>
        <dbReference type="ChEBI" id="CHEBI:58121"/>
        <dbReference type="ChEBI" id="CHEBI:58349"/>
        <dbReference type="ChEBI" id="CHEBI:58759"/>
        <dbReference type="EC" id="1.1.1.44"/>
    </reaction>
</comment>
<comment type="pathway">
    <text>Carbohydrate degradation; pentose phosphate pathway; D-ribulose 5-phosphate from D-glucose 6-phosphate (oxidative stage): step 3/3.</text>
</comment>
<comment type="subunit">
    <text evidence="1">Homodimer.</text>
</comment>
<comment type="similarity">
    <text evidence="2">Belongs to the 6-phosphogluconate dehydrogenase family.</text>
</comment>
<organism>
    <name type="scientific">Pseudescherichia vulneris</name>
    <name type="common">Escherichia vulneris</name>
    <dbReference type="NCBI Taxonomy" id="566"/>
    <lineage>
        <taxon>Bacteria</taxon>
        <taxon>Pseudomonadati</taxon>
        <taxon>Pseudomonadota</taxon>
        <taxon>Gammaproteobacteria</taxon>
        <taxon>Enterobacterales</taxon>
        <taxon>Enterobacteriaceae</taxon>
        <taxon>Pseudescherichia</taxon>
    </lineage>
</organism>
<name>6PGD_PSEVU</name>
<proteinExistence type="inferred from homology"/>
<evidence type="ECO:0000250" key="1"/>
<evidence type="ECO:0000305" key="2"/>